<comment type="function">
    <text evidence="2">Enhances the high-affinity desensitization of human P2RX3 purinoceptors.</text>
</comment>
<comment type="subcellular location">
    <subcellularLocation>
        <location evidence="1">Secreted</location>
    </subcellularLocation>
</comment>
<comment type="tissue specificity">
    <text evidence="5">Expressed by the venom gland.</text>
</comment>
<comment type="domain">
    <text evidence="2">The toxin is composed of 2 domains: a highly rigid N-terminal inhibitor cystine knot (knottin) domain and a rather flexible C-terminal linear cationic cytotoxin domain that forms amphiphilic alpha-helices.</text>
</comment>
<comment type="domain">
    <text evidence="2">The presence of a 'disulfide through disulfide knot' structurally defines this protein as a knottin.</text>
</comment>
<comment type="similarity">
    <text evidence="4">Belongs to the neurotoxin 19 (CSTX) family. 05 (U4-Lctx) subfamily.</text>
</comment>
<comment type="sequence caution" evidence="4">
    <conflict type="frameshift">
        <sequence resource="EMBL-CDS" id="ACI41355"/>
    </conflict>
</comment>
<dbReference type="EMBL" id="EU926017">
    <property type="protein sequence ID" value="ACI41349.1"/>
    <property type="molecule type" value="mRNA"/>
</dbReference>
<dbReference type="EMBL" id="EU926023">
    <property type="protein sequence ID" value="ACI41355.1"/>
    <property type="status" value="ALT_FRAME"/>
    <property type="molecule type" value="mRNA"/>
</dbReference>
<dbReference type="EMBL" id="FM864021">
    <property type="protein sequence ID" value="CAS03619.1"/>
    <property type="molecule type" value="mRNA"/>
</dbReference>
<dbReference type="SMR" id="B6DCT3"/>
<dbReference type="ArachnoServer" id="AS000966">
    <property type="toxin name" value="U4-lycotoxin-Ls1a"/>
</dbReference>
<dbReference type="GO" id="GO:0005576">
    <property type="term" value="C:extracellular region"/>
    <property type="evidence" value="ECO:0007669"/>
    <property type="project" value="UniProtKB-SubCell"/>
</dbReference>
<dbReference type="GO" id="GO:0005246">
    <property type="term" value="F:calcium channel regulator activity"/>
    <property type="evidence" value="ECO:0007669"/>
    <property type="project" value="UniProtKB-KW"/>
</dbReference>
<dbReference type="GO" id="GO:0090729">
    <property type="term" value="F:toxin activity"/>
    <property type="evidence" value="ECO:0007669"/>
    <property type="project" value="UniProtKB-KW"/>
</dbReference>
<dbReference type="InterPro" id="IPR019553">
    <property type="entry name" value="Spider_toxin_CSTX_knottin"/>
</dbReference>
<dbReference type="InterPro" id="IPR011142">
    <property type="entry name" value="Spider_toxin_CSTX_Knottin_CS"/>
</dbReference>
<dbReference type="Pfam" id="PF10530">
    <property type="entry name" value="Toxin_35"/>
    <property type="match status" value="1"/>
</dbReference>
<dbReference type="PROSITE" id="PS60029">
    <property type="entry name" value="SPIDER_CSTX"/>
    <property type="match status" value="1"/>
</dbReference>
<accession>B6DCT3</accession>
<accession>B6DCT9</accession>
<keyword id="KW-0108">Calcium channel impairing toxin</keyword>
<keyword id="KW-1015">Disulfide bond</keyword>
<keyword id="KW-0872">Ion channel impairing toxin</keyword>
<keyword id="KW-0960">Knottin</keyword>
<keyword id="KW-0964">Secreted</keyword>
<keyword id="KW-0732">Signal</keyword>
<keyword id="KW-0800">Toxin</keyword>
<sequence length="109" mass="12412">MKVLVLFSVLFLTLFSYSSTEAIDEFDSDAEDDMLSLMANEQVRAKACTPRLHDCSHDRHSCCRGELFKDVCYCFYPEGEDKTEVCSCQQPKSHKYIEKVVDKAKTVVG</sequence>
<organism>
    <name type="scientific">Lycosa singoriensis</name>
    <name type="common">Wolf spider</name>
    <name type="synonym">Aranea singoriensis</name>
    <dbReference type="NCBI Taxonomy" id="434756"/>
    <lineage>
        <taxon>Eukaryota</taxon>
        <taxon>Metazoa</taxon>
        <taxon>Ecdysozoa</taxon>
        <taxon>Arthropoda</taxon>
        <taxon>Chelicerata</taxon>
        <taxon>Arachnida</taxon>
        <taxon>Araneae</taxon>
        <taxon>Araneomorphae</taxon>
        <taxon>Entelegynae</taxon>
        <taxon>Lycosoidea</taxon>
        <taxon>Lycosidae</taxon>
        <taxon>Lycosa</taxon>
    </lineage>
</organism>
<name>TX401_LYCSI</name>
<reference key="1">
    <citation type="journal article" date="2010" name="Zoology">
        <title>Transcriptome analysis of the venom glands of the Chinese wolf spider Lycosa singoriensis.</title>
        <authorList>
            <person name="Zhang Y."/>
            <person name="Chen J."/>
            <person name="Tang X."/>
            <person name="Wang F."/>
            <person name="Jiang L."/>
            <person name="Xiong X."/>
            <person name="Wang M."/>
            <person name="Rong M."/>
            <person name="Liu Z."/>
            <person name="Liang S."/>
        </authorList>
    </citation>
    <scope>NUCLEOTIDE SEQUENCE [LARGE SCALE MRNA]</scope>
    <source>
        <tissue>Venom gland</tissue>
    </source>
</reference>
<feature type="signal peptide" evidence="3">
    <location>
        <begin position="1"/>
        <end position="22"/>
    </location>
</feature>
<feature type="propeptide" id="PRO_0000401679" evidence="1">
    <location>
        <begin position="23"/>
        <end position="44"/>
    </location>
</feature>
<feature type="chain" id="PRO_0000401680" description="U4-lycotoxin-Ls1a">
    <location>
        <begin position="45"/>
        <end position="109"/>
    </location>
</feature>
<feature type="region of interest" description="Knottin domain" evidence="2">
    <location>
        <begin position="45"/>
        <end position="88"/>
    </location>
</feature>
<feature type="region of interest" description="Linear cationic cytotoxin domain" evidence="2">
    <location>
        <begin position="89"/>
        <end position="108"/>
    </location>
</feature>
<feature type="disulfide bond" evidence="2">
    <location>
        <begin position="48"/>
        <end position="63"/>
    </location>
</feature>
<feature type="disulfide bond" evidence="2">
    <location>
        <begin position="55"/>
        <end position="72"/>
    </location>
</feature>
<feature type="disulfide bond" evidence="2">
    <location>
        <begin position="62"/>
        <end position="88"/>
    </location>
</feature>
<feature type="disulfide bond" evidence="2">
    <location>
        <begin position="74"/>
        <end position="86"/>
    </location>
</feature>
<protein>
    <recommendedName>
        <fullName evidence="4">U4-lycotoxin-Ls1a</fullName>
        <shortName evidence="4">U4-LCTX-Ls1a</shortName>
    </recommendedName>
    <alternativeName>
        <fullName>Toxin-like structure LSTX-C1</fullName>
    </alternativeName>
    <alternativeName>
        <fullName>Toxin-like structure LSTX-C7</fullName>
    </alternativeName>
</protein>
<proteinExistence type="inferred from homology"/>
<evidence type="ECO:0000250" key="1"/>
<evidence type="ECO:0000250" key="2">
    <source>
        <dbReference type="UniProtKB" id="B3EWH0"/>
    </source>
</evidence>
<evidence type="ECO:0000255" key="3"/>
<evidence type="ECO:0000305" key="4"/>
<evidence type="ECO:0000305" key="5">
    <source>
    </source>
</evidence>